<evidence type="ECO:0000250" key="1">
    <source>
        <dbReference type="UniProtKB" id="P05326"/>
    </source>
</evidence>
<evidence type="ECO:0000255" key="2">
    <source>
        <dbReference type="PROSITE-ProRule" id="PRU00805"/>
    </source>
</evidence>
<evidence type="ECO:0000256" key="3">
    <source>
        <dbReference type="SAM" id="MobiDB-lite"/>
    </source>
</evidence>
<evidence type="ECO:0000305" key="4"/>
<accession>Q53932</accession>
<reference key="1">
    <citation type="journal article" date="1996" name="Wei Sheng Wu Xue Bao">
        <title>Cloning and sequencing the isopenicillin N synthetase (IPNS) gene from Streptomyces cattleya.</title>
        <authorList>
            <person name="Wang Y."/>
            <person name="Li R."/>
        </authorList>
    </citation>
    <scope>NUCLEOTIDE SEQUENCE [GENOMIC DNA]</scope>
</reference>
<protein>
    <recommendedName>
        <fullName>Isopenicillin N synthase</fullName>
        <shortName>IPNS</shortName>
        <ecNumber>1.21.3.1</ecNumber>
    </recommendedName>
</protein>
<comment type="function">
    <text>Removes, in the presence of oxygen, 4 hydrogen atoms from delta-L-(alpha-aminoadipyl)-L-cysteinyl-D-valine (ACV) to form the azetidinone and thiazolidine rings of isopenicillin.</text>
</comment>
<comment type="catalytic activity">
    <reaction>
        <text>N-[(5S)-5-amino-5-carboxypentanoyl]-L-cysteinyl-D-valine + O2 = isopenicillin N + 2 H2O</text>
        <dbReference type="Rhea" id="RHEA:22428"/>
        <dbReference type="ChEBI" id="CHEBI:15377"/>
        <dbReference type="ChEBI" id="CHEBI:15379"/>
        <dbReference type="ChEBI" id="CHEBI:58399"/>
        <dbReference type="ChEBI" id="CHEBI:58572"/>
        <dbReference type="EC" id="1.21.3.1"/>
    </reaction>
</comment>
<comment type="cofactor">
    <cofactor>
        <name>Fe cation</name>
        <dbReference type="ChEBI" id="CHEBI:24875"/>
    </cofactor>
</comment>
<comment type="cofactor">
    <cofactor>
        <name>L-ascorbate</name>
        <dbReference type="ChEBI" id="CHEBI:38290"/>
    </cofactor>
</comment>
<comment type="pathway">
    <text>Antibiotic biosynthesis; penicillin G biosynthesis; penicillin G from L-alpha-aminoadipate and L-cysteine and L-valine: step 2/3.</text>
</comment>
<comment type="similarity">
    <text evidence="4">Belongs to the iron/ascorbate-dependent oxidoreductase family.</text>
</comment>
<proteinExistence type="inferred from homology"/>
<gene>
    <name type="primary">pcbC</name>
    <name type="synonym">ipnS</name>
</gene>
<dbReference type="EC" id="1.21.3.1"/>
<dbReference type="EMBL" id="D78166">
    <property type="protein sequence ID" value="BAA11234.1"/>
    <property type="molecule type" value="Genomic_DNA"/>
</dbReference>
<dbReference type="PIR" id="A58458">
    <property type="entry name" value="A58458"/>
</dbReference>
<dbReference type="SMR" id="Q53932"/>
<dbReference type="BRENDA" id="1.21.3.1">
    <property type="organism ID" value="5990"/>
</dbReference>
<dbReference type="UniPathway" id="UPA00149">
    <property type="reaction ID" value="UER00240"/>
</dbReference>
<dbReference type="GO" id="GO:0005506">
    <property type="term" value="F:iron ion binding"/>
    <property type="evidence" value="ECO:0007669"/>
    <property type="project" value="InterPro"/>
</dbReference>
<dbReference type="GO" id="GO:0016216">
    <property type="term" value="F:isopenicillin-N synthase activity"/>
    <property type="evidence" value="ECO:0007669"/>
    <property type="project" value="UniProtKB-EC"/>
</dbReference>
<dbReference type="GO" id="GO:0031418">
    <property type="term" value="F:L-ascorbic acid binding"/>
    <property type="evidence" value="ECO:0007669"/>
    <property type="project" value="UniProtKB-KW"/>
</dbReference>
<dbReference type="GO" id="GO:0017000">
    <property type="term" value="P:antibiotic biosynthetic process"/>
    <property type="evidence" value="ECO:0007669"/>
    <property type="project" value="UniProtKB-KW"/>
</dbReference>
<dbReference type="Gene3D" id="2.60.120.330">
    <property type="entry name" value="B-lactam Antibiotic, Isopenicillin N Synthase, Chain"/>
    <property type="match status" value="1"/>
</dbReference>
<dbReference type="InterPro" id="IPR044861">
    <property type="entry name" value="IPNS-like_FE2OG_OXY"/>
</dbReference>
<dbReference type="InterPro" id="IPR027443">
    <property type="entry name" value="IPNS-like_sf"/>
</dbReference>
<dbReference type="InterPro" id="IPR050231">
    <property type="entry name" value="Iron_ascorbate_oxido_reductase"/>
</dbReference>
<dbReference type="InterPro" id="IPR002057">
    <property type="entry name" value="Isopenicillin-N_synth_CS"/>
</dbReference>
<dbReference type="InterPro" id="IPR005123">
    <property type="entry name" value="Oxoglu/Fe-dep_dioxygenase_dom"/>
</dbReference>
<dbReference type="PANTHER" id="PTHR47990">
    <property type="entry name" value="2-OXOGLUTARATE (2OG) AND FE(II)-DEPENDENT OXYGENASE SUPERFAMILY PROTEIN-RELATED"/>
    <property type="match status" value="1"/>
</dbReference>
<dbReference type="Pfam" id="PF03171">
    <property type="entry name" value="2OG-FeII_Oxy"/>
    <property type="match status" value="1"/>
</dbReference>
<dbReference type="PRINTS" id="PR00682">
    <property type="entry name" value="IPNSYNTHASE"/>
</dbReference>
<dbReference type="SUPFAM" id="SSF51197">
    <property type="entry name" value="Clavaminate synthase-like"/>
    <property type="match status" value="1"/>
</dbReference>
<dbReference type="PROSITE" id="PS51471">
    <property type="entry name" value="FE2OG_OXY"/>
    <property type="match status" value="1"/>
</dbReference>
<dbReference type="PROSITE" id="PS00185">
    <property type="entry name" value="IPNS_1"/>
    <property type="match status" value="1"/>
</dbReference>
<dbReference type="PROSITE" id="PS00186">
    <property type="entry name" value="IPNS_2"/>
    <property type="match status" value="1"/>
</dbReference>
<sequence length="321" mass="36577">MPVLMPSADVPTIDISPQLFGTDPTPRRTSRGRSTRPARGSGFFYASHHGIDVRRLQTWSNESTTMTDQRSTTWRSTRYNENNSHVRNGYYMARPGRETVESWCYLNPSFGEDHPMMKAGTPMHEVNVWPDEERHPDFGSFGEQYHREVSASRRCCCGASRWRRQAGESSSNEVTEEDTLSAVSMIRYPYLDPYPEAAIKTGPDGTRLSFEDHLDVSMITVLSKTEVQNLQVETVDGWQSLPTSGENFLINCGTYLGYLTNDYFPAPNHRVKYVNAERLSLPFFLHAGQNSVMKPFTRRTGDRKLNPAVTYGEYLQEGFTR</sequence>
<organism>
    <name type="scientific">Streptantibioticus cattleyicolor</name>
    <name type="common">Streptomyces cattleya</name>
    <dbReference type="NCBI Taxonomy" id="29303"/>
    <lineage>
        <taxon>Bacteria</taxon>
        <taxon>Bacillati</taxon>
        <taxon>Actinomycetota</taxon>
        <taxon>Actinomycetes</taxon>
        <taxon>Kitasatosporales</taxon>
        <taxon>Streptomycetaceae</taxon>
        <taxon>Streptantibioticus</taxon>
    </lineage>
</organism>
<name>IPNS_STRCT</name>
<feature type="chain" id="PRO_0000219505" description="Isopenicillin N synthase">
    <location>
        <begin position="1"/>
        <end position="321"/>
    </location>
</feature>
<feature type="domain" description="Fe2OG dioxygenase" evidence="2">
    <location>
        <begin position="179"/>
        <end position="287"/>
    </location>
</feature>
<feature type="region of interest" description="Disordered" evidence="3">
    <location>
        <begin position="1"/>
        <end position="42"/>
    </location>
</feature>
<feature type="binding site" evidence="1">
    <location>
        <position position="87"/>
    </location>
    <ligand>
        <name>isopenicillin N</name>
        <dbReference type="ChEBI" id="CHEBI:58399"/>
    </ligand>
</feature>
<feature type="binding site" evidence="1">
    <location>
        <position position="87"/>
    </location>
    <ligand>
        <name>N-[(5S)-5-amino-5-carboxypentanoyl]-L-cysteinyl-D-valine</name>
        <dbReference type="ChEBI" id="CHEBI:58572"/>
    </ligand>
</feature>
<feature type="binding site" evidence="1">
    <location>
        <position position="91"/>
    </location>
    <ligand>
        <name>isopenicillin N</name>
        <dbReference type="ChEBI" id="CHEBI:58399"/>
    </ligand>
</feature>
<feature type="binding site" evidence="1">
    <location>
        <position position="91"/>
    </location>
    <ligand>
        <name>N-[(5S)-5-amino-5-carboxypentanoyl]-L-cysteinyl-D-valine</name>
        <dbReference type="ChEBI" id="CHEBI:58572"/>
    </ligand>
</feature>
<feature type="binding site" evidence="1">
    <location>
        <position position="188"/>
    </location>
    <ligand>
        <name>isopenicillin N</name>
        <dbReference type="ChEBI" id="CHEBI:58399"/>
    </ligand>
</feature>
<feature type="binding site" evidence="1">
    <location>
        <position position="188"/>
    </location>
    <ligand>
        <name>N-[(5S)-5-amino-5-carboxypentanoyl]-L-cysteinyl-D-valine</name>
        <dbReference type="ChEBI" id="CHEBI:58572"/>
    </ligand>
</feature>
<feature type="binding site" evidence="2">
    <location>
        <position position="213"/>
    </location>
    <ligand>
        <name>Fe(2+)</name>
        <dbReference type="ChEBI" id="CHEBI:29033"/>
    </ligand>
</feature>
<feature type="binding site" evidence="1">
    <location>
        <position position="213"/>
    </location>
    <ligand>
        <name>N-[(5S)-5-amino-5-carboxypentanoyl]-L-cysteinyl-D-valine</name>
        <dbReference type="ChEBI" id="CHEBI:58572"/>
    </ligand>
</feature>
<feature type="binding site" evidence="2">
    <location>
        <position position="215"/>
    </location>
    <ligand>
        <name>Fe(2+)</name>
        <dbReference type="ChEBI" id="CHEBI:29033"/>
    </ligand>
</feature>
<feature type="binding site" evidence="1">
    <location>
        <position position="215"/>
    </location>
    <ligand>
        <name>N-[(5S)-5-amino-5-carboxypentanoyl]-L-cysteinyl-D-valine</name>
        <dbReference type="ChEBI" id="CHEBI:58572"/>
    </ligand>
</feature>
<feature type="binding site" evidence="2">
    <location>
        <position position="269"/>
    </location>
    <ligand>
        <name>Fe(2+)</name>
        <dbReference type="ChEBI" id="CHEBI:29033"/>
    </ligand>
</feature>
<feature type="binding site" evidence="2">
    <location>
        <position position="278"/>
    </location>
    <ligand>
        <name>2-oxoglutarate</name>
        <dbReference type="ChEBI" id="CHEBI:16810"/>
    </ligand>
</feature>
<feature type="binding site" evidence="1">
    <location>
        <position position="280"/>
    </location>
    <ligand>
        <name>isopenicillin N</name>
        <dbReference type="ChEBI" id="CHEBI:58399"/>
    </ligand>
</feature>
<feature type="binding site" evidence="1">
    <location>
        <position position="280"/>
    </location>
    <ligand>
        <name>N-[(5S)-5-amino-5-carboxypentanoyl]-L-cysteinyl-D-valine</name>
        <dbReference type="ChEBI" id="CHEBI:58572"/>
    </ligand>
</feature>
<keyword id="KW-0045">Antibiotic biosynthesis</keyword>
<keyword id="KW-0408">Iron</keyword>
<keyword id="KW-0479">Metal-binding</keyword>
<keyword id="KW-0560">Oxidoreductase</keyword>
<keyword id="KW-0847">Vitamin C</keyword>